<comment type="function">
    <text evidence="1 2">A mycothiol (MSH, N-acetylcysteinyl-glucosaminyl-inositol) S-conjugate amidase, it recycles conjugated MSH to the N-acetyl cysteine conjugate (AcCys S-conjugate, a mercapturic acid) and the MSH precursor. Involved in MSH-dependent detoxification of a number of alkylating agents and antibiotics.</text>
</comment>
<comment type="catalytic activity">
    <reaction evidence="1">
        <text>mycothiol S-conjugate + H2O = an N-acetyl-L-cysteine-S-conjugate + 1D-myo-inositol 2-amino-2-deoxy-alpha-D-glucopyranoside</text>
        <dbReference type="Rhea" id="RHEA:36543"/>
        <dbReference type="ChEBI" id="CHEBI:15377"/>
        <dbReference type="ChEBI" id="CHEBI:58718"/>
        <dbReference type="ChEBI" id="CHEBI:58886"/>
        <dbReference type="ChEBI" id="CHEBI:59633"/>
        <dbReference type="EC" id="3.5.1.115"/>
    </reaction>
</comment>
<comment type="cofactor">
    <cofactor evidence="1">
        <name>Zn(2+)</name>
        <dbReference type="ChEBI" id="CHEBI:29105"/>
    </cofactor>
    <text evidence="1">Binds 1 zinc ion per subunit.</text>
</comment>
<comment type="subunit">
    <text evidence="1">Monomer.</text>
</comment>
<comment type="induction">
    <text evidence="2">Transiently induced by thiol-oxidant diamide, under direct control of SigR. Also induced when MSH is oxidized or conjugated.</text>
</comment>
<comment type="disruption phenotype">
    <text evidence="2">Loss of amidase activity on mycothiol bimane, leading to dramatically decreased levels of N-acetylcysteinyl bimane. Increased sensitivity to a number of alkylating agents and antibiotics including N-ethylmaleimide and lincomycin.</text>
</comment>
<comment type="similarity">
    <text evidence="1">Belongs to the MshB deacetylase family. Mca subfamily.</text>
</comment>
<feature type="chain" id="PRO_0000423188" description="Mycothiol S-conjugate amidase">
    <location>
        <begin position="1"/>
        <end position="293"/>
    </location>
</feature>
<feature type="binding site" evidence="1">
    <location>
        <position position="13"/>
    </location>
    <ligand>
        <name>Zn(2+)</name>
        <dbReference type="ChEBI" id="CHEBI:29105"/>
    </ligand>
</feature>
<feature type="binding site" evidence="1">
    <location>
        <position position="16"/>
    </location>
    <ligand>
        <name>Zn(2+)</name>
        <dbReference type="ChEBI" id="CHEBI:29105"/>
    </ligand>
</feature>
<feature type="binding site" evidence="1">
    <location>
        <position position="144"/>
    </location>
    <ligand>
        <name>Zn(2+)</name>
        <dbReference type="ChEBI" id="CHEBI:29105"/>
    </ligand>
</feature>
<organism>
    <name type="scientific">Streptomyces coelicolor (strain ATCC BAA-471 / A3(2) / M145)</name>
    <dbReference type="NCBI Taxonomy" id="100226"/>
    <lineage>
        <taxon>Bacteria</taxon>
        <taxon>Bacillati</taxon>
        <taxon>Actinomycetota</taxon>
        <taxon>Actinomycetes</taxon>
        <taxon>Kitasatosporales</taxon>
        <taxon>Streptomycetaceae</taxon>
        <taxon>Streptomyces</taxon>
        <taxon>Streptomyces albidoflavus group</taxon>
    </lineage>
</organism>
<protein>
    <recommendedName>
        <fullName evidence="1">Mycothiol S-conjugate amidase</fullName>
        <ecNumber evidence="1">3.5.1.115</ecNumber>
    </recommendedName>
</protein>
<gene>
    <name evidence="1" type="primary">mca</name>
    <name type="ordered locus">SCO4967</name>
</gene>
<keyword id="KW-0378">Hydrolase</keyword>
<keyword id="KW-0479">Metal-binding</keyword>
<keyword id="KW-1185">Reference proteome</keyword>
<keyword id="KW-0862">Zinc</keyword>
<sequence length="293" mass="33164">MTDQLRLMAVHAHPDDESSKGAATMAKYVSEGVDVLVVTCTGGERGSILNPKLQGDAYIEENIHEVRRKEMDEAREILGVGQEWLGFVDSGLPEGDPLPPLPEGCFALEDVDKAAGELVRKIRSFRPQVITTYDENGGYPHPDHIMTHKITMVAFEGAADTEKYPESEYGTAYQPLKVYYNQGFNRPRTEALHHALLDRGLESPYEDWLKRWSEFERKERTLTTHVPCADFFEIRDKALIAHATQIDPEGGWFRVPMEIQKEVWPTEEYELAKSLVETSLPEDDLFAGIRDNA</sequence>
<accession>Q9ADK0</accession>
<evidence type="ECO:0000255" key="1">
    <source>
        <dbReference type="HAMAP-Rule" id="MF_01482"/>
    </source>
</evidence>
<evidence type="ECO:0000269" key="2">
    <source>
    </source>
</evidence>
<reference key="1">
    <citation type="journal article" date="2002" name="Nature">
        <title>Complete genome sequence of the model actinomycete Streptomyces coelicolor A3(2).</title>
        <authorList>
            <person name="Bentley S.D."/>
            <person name="Chater K.F."/>
            <person name="Cerdeno-Tarraga A.-M."/>
            <person name="Challis G.L."/>
            <person name="Thomson N.R."/>
            <person name="James K.D."/>
            <person name="Harris D.E."/>
            <person name="Quail M.A."/>
            <person name="Kieser H."/>
            <person name="Harper D."/>
            <person name="Bateman A."/>
            <person name="Brown S."/>
            <person name="Chandra G."/>
            <person name="Chen C.W."/>
            <person name="Collins M."/>
            <person name="Cronin A."/>
            <person name="Fraser A."/>
            <person name="Goble A."/>
            <person name="Hidalgo J."/>
            <person name="Hornsby T."/>
            <person name="Howarth S."/>
            <person name="Huang C.-H."/>
            <person name="Kieser T."/>
            <person name="Larke L."/>
            <person name="Murphy L.D."/>
            <person name="Oliver K."/>
            <person name="O'Neil S."/>
            <person name="Rabbinowitsch E."/>
            <person name="Rajandream M.A."/>
            <person name="Rutherford K.M."/>
            <person name="Rutter S."/>
            <person name="Seeger K."/>
            <person name="Saunders D."/>
            <person name="Sharp S."/>
            <person name="Squares R."/>
            <person name="Squares S."/>
            <person name="Taylor K."/>
            <person name="Warren T."/>
            <person name="Wietzorrek A."/>
            <person name="Woodward J.R."/>
            <person name="Barrell B.G."/>
            <person name="Parkhill J."/>
            <person name="Hopwood D.A."/>
        </authorList>
    </citation>
    <scope>NUCLEOTIDE SEQUENCE [LARGE SCALE GENOMIC DNA]</scope>
    <source>
        <strain>ATCC BAA-471 / A3(2) / M145</strain>
    </source>
</reference>
<reference key="2">
    <citation type="journal article" date="2008" name="Mol. Microbiol.">
        <title>Mycothiol regulates and is regulated by a thiol-specific antisigma factor RsrA and sigma(R) in Streptomyces coelicolor.</title>
        <authorList>
            <person name="Park J.H."/>
            <person name="Roe J.H."/>
        </authorList>
    </citation>
    <scope>FUNCTION</scope>
    <scope>INDUCTION</scope>
    <scope>DISRUPTION PHENOTYPE</scope>
    <source>
        <strain>ATCC BAA-471 / A3(2) / M145</strain>
    </source>
</reference>
<name>MCA_STRCO</name>
<dbReference type="EC" id="3.5.1.115" evidence="1"/>
<dbReference type="EMBL" id="AL939122">
    <property type="protein sequence ID" value="CAD30952.1"/>
    <property type="molecule type" value="Genomic_DNA"/>
</dbReference>
<dbReference type="RefSeq" id="NP_629119.1">
    <property type="nucleotide sequence ID" value="NC_003888.3"/>
</dbReference>
<dbReference type="SMR" id="Q9ADK0"/>
<dbReference type="FunCoup" id="Q9ADK0">
    <property type="interactions" value="1"/>
</dbReference>
<dbReference type="STRING" id="100226.gene:17762616"/>
<dbReference type="PaxDb" id="100226-SCO4967"/>
<dbReference type="KEGG" id="sco:SCO4967"/>
<dbReference type="PATRIC" id="fig|100226.15.peg.5047"/>
<dbReference type="eggNOG" id="COG2120">
    <property type="taxonomic scope" value="Bacteria"/>
</dbReference>
<dbReference type="HOGENOM" id="CLU_049311_2_2_11"/>
<dbReference type="InParanoid" id="Q9ADK0"/>
<dbReference type="OrthoDB" id="158614at2"/>
<dbReference type="PhylomeDB" id="Q9ADK0"/>
<dbReference type="Proteomes" id="UP000001973">
    <property type="component" value="Chromosome"/>
</dbReference>
<dbReference type="GO" id="GO:0016811">
    <property type="term" value="F:hydrolase activity, acting on carbon-nitrogen (but not peptide) bonds, in linear amides"/>
    <property type="evidence" value="ECO:0000318"/>
    <property type="project" value="GO_Central"/>
</dbReference>
<dbReference type="GO" id="GO:0008270">
    <property type="term" value="F:zinc ion binding"/>
    <property type="evidence" value="ECO:0007669"/>
    <property type="project" value="UniProtKB-UniRule"/>
</dbReference>
<dbReference type="GO" id="GO:0010126">
    <property type="term" value="P:mycothiol metabolic process"/>
    <property type="evidence" value="ECO:0000315"/>
    <property type="project" value="UniProtKB"/>
</dbReference>
<dbReference type="GO" id="GO:0010127">
    <property type="term" value="P:mycothiol-dependent detoxification"/>
    <property type="evidence" value="ECO:0000315"/>
    <property type="project" value="UniProtKB"/>
</dbReference>
<dbReference type="FunFam" id="3.40.50.10320:FF:000001">
    <property type="entry name" value="Mycothiol S-conjugate amidase"/>
    <property type="match status" value="1"/>
</dbReference>
<dbReference type="Gene3D" id="3.40.50.10320">
    <property type="entry name" value="LmbE-like"/>
    <property type="match status" value="1"/>
</dbReference>
<dbReference type="HAMAP" id="MF_01482">
    <property type="entry name" value="Mca"/>
    <property type="match status" value="1"/>
</dbReference>
<dbReference type="InterPro" id="IPR003737">
    <property type="entry name" value="GlcNAc_PI_deacetylase-related"/>
</dbReference>
<dbReference type="InterPro" id="IPR024078">
    <property type="entry name" value="LmbE-like_dom_sf"/>
</dbReference>
<dbReference type="InterPro" id="IPR017811">
    <property type="entry name" value="Mca"/>
</dbReference>
<dbReference type="NCBIfam" id="TIGR03446">
    <property type="entry name" value="mycothiol_Mca"/>
    <property type="match status" value="1"/>
</dbReference>
<dbReference type="PANTHER" id="PTHR12993:SF11">
    <property type="entry name" value="N-ACETYLGLUCOSAMINYL-PHOSPHATIDYLINOSITOL DE-N-ACETYLASE"/>
    <property type="match status" value="1"/>
</dbReference>
<dbReference type="PANTHER" id="PTHR12993">
    <property type="entry name" value="N-ACETYLGLUCOSAMINYL-PHOSPHATIDYLINOSITOL DE-N-ACETYLASE-RELATED"/>
    <property type="match status" value="1"/>
</dbReference>
<dbReference type="Pfam" id="PF02585">
    <property type="entry name" value="PIG-L"/>
    <property type="match status" value="1"/>
</dbReference>
<dbReference type="SUPFAM" id="SSF102588">
    <property type="entry name" value="LmbE-like"/>
    <property type="match status" value="1"/>
</dbReference>
<proteinExistence type="evidence at transcript level"/>